<reference key="1">
    <citation type="submission" date="2008-06" db="EMBL/GenBank/DDBJ databases">
        <title>Complete sequence of Chlorobaculum parvum NCIB 8327.</title>
        <authorList>
            <consortium name="US DOE Joint Genome Institute"/>
            <person name="Lucas S."/>
            <person name="Copeland A."/>
            <person name="Lapidus A."/>
            <person name="Glavina del Rio T."/>
            <person name="Dalin E."/>
            <person name="Tice H."/>
            <person name="Bruce D."/>
            <person name="Goodwin L."/>
            <person name="Pitluck S."/>
            <person name="Schmutz J."/>
            <person name="Larimer F."/>
            <person name="Land M."/>
            <person name="Hauser L."/>
            <person name="Kyrpides N."/>
            <person name="Mikhailova N."/>
            <person name="Zhao F."/>
            <person name="Li T."/>
            <person name="Liu Z."/>
            <person name="Overmann J."/>
            <person name="Bryant D.A."/>
            <person name="Richardson P."/>
        </authorList>
    </citation>
    <scope>NUCLEOTIDE SEQUENCE [LARGE SCALE GENOMIC DNA]</scope>
    <source>
        <strain>DSM 263 / NCIMB 8327</strain>
    </source>
</reference>
<name>Y015_CHLP8</name>
<proteinExistence type="inferred from homology"/>
<evidence type="ECO:0000255" key="1">
    <source>
        <dbReference type="HAMAP-Rule" id="MF_00048"/>
    </source>
</evidence>
<sequence length="129" mass="14370">MHAPQWLGAEGETIAAKYLAAQGYRILDRNYRFHRNEIDIIALDGGVLCFIEVKTRTSIGKGHPAESVTPRKQKEIIRAATGYLAGLDDPWVTCRFDVIAVLAGSLDERSIREYEIEHLKAAFIVADEG</sequence>
<feature type="chain" id="PRO_1000091228" description="UPF0102 protein Cpar_0015">
    <location>
        <begin position="1"/>
        <end position="129"/>
    </location>
</feature>
<organism>
    <name type="scientific">Chlorobaculum parvum (strain DSM 263 / NCIMB 8327)</name>
    <name type="common">Chlorobium vibrioforme subsp. thiosulfatophilum</name>
    <dbReference type="NCBI Taxonomy" id="517417"/>
    <lineage>
        <taxon>Bacteria</taxon>
        <taxon>Pseudomonadati</taxon>
        <taxon>Chlorobiota</taxon>
        <taxon>Chlorobiia</taxon>
        <taxon>Chlorobiales</taxon>
        <taxon>Chlorobiaceae</taxon>
        <taxon>Chlorobaculum</taxon>
    </lineage>
</organism>
<protein>
    <recommendedName>
        <fullName evidence="1">UPF0102 protein Cpar_0015</fullName>
    </recommendedName>
</protein>
<accession>B3QQX9</accession>
<dbReference type="EMBL" id="CP001099">
    <property type="protein sequence ID" value="ACF10444.1"/>
    <property type="molecule type" value="Genomic_DNA"/>
</dbReference>
<dbReference type="RefSeq" id="WP_012501279.1">
    <property type="nucleotide sequence ID" value="NC_011027.1"/>
</dbReference>
<dbReference type="SMR" id="B3QQX9"/>
<dbReference type="STRING" id="517417.Cpar_0015"/>
<dbReference type="KEGG" id="cpc:Cpar_0015"/>
<dbReference type="eggNOG" id="COG0792">
    <property type="taxonomic scope" value="Bacteria"/>
</dbReference>
<dbReference type="HOGENOM" id="CLU_115353_2_1_10"/>
<dbReference type="OrthoDB" id="9802516at2"/>
<dbReference type="Proteomes" id="UP000008811">
    <property type="component" value="Chromosome"/>
</dbReference>
<dbReference type="GO" id="GO:0003676">
    <property type="term" value="F:nucleic acid binding"/>
    <property type="evidence" value="ECO:0007669"/>
    <property type="project" value="InterPro"/>
</dbReference>
<dbReference type="CDD" id="cd20736">
    <property type="entry name" value="PoNe_Nuclease"/>
    <property type="match status" value="1"/>
</dbReference>
<dbReference type="Gene3D" id="3.40.1350.10">
    <property type="match status" value="1"/>
</dbReference>
<dbReference type="HAMAP" id="MF_00048">
    <property type="entry name" value="UPF0102"/>
    <property type="match status" value="1"/>
</dbReference>
<dbReference type="InterPro" id="IPR011335">
    <property type="entry name" value="Restrct_endonuc-II-like"/>
</dbReference>
<dbReference type="InterPro" id="IPR011856">
    <property type="entry name" value="tRNA_endonuc-like_dom_sf"/>
</dbReference>
<dbReference type="InterPro" id="IPR003509">
    <property type="entry name" value="UPF0102_YraN-like"/>
</dbReference>
<dbReference type="NCBIfam" id="NF009150">
    <property type="entry name" value="PRK12497.1-3"/>
    <property type="match status" value="1"/>
</dbReference>
<dbReference type="NCBIfam" id="NF009154">
    <property type="entry name" value="PRK12497.3-3"/>
    <property type="match status" value="1"/>
</dbReference>
<dbReference type="NCBIfam" id="TIGR00252">
    <property type="entry name" value="YraN family protein"/>
    <property type="match status" value="1"/>
</dbReference>
<dbReference type="PANTHER" id="PTHR34039">
    <property type="entry name" value="UPF0102 PROTEIN YRAN"/>
    <property type="match status" value="1"/>
</dbReference>
<dbReference type="PANTHER" id="PTHR34039:SF1">
    <property type="entry name" value="UPF0102 PROTEIN YRAN"/>
    <property type="match status" value="1"/>
</dbReference>
<dbReference type="Pfam" id="PF02021">
    <property type="entry name" value="UPF0102"/>
    <property type="match status" value="1"/>
</dbReference>
<dbReference type="SUPFAM" id="SSF52980">
    <property type="entry name" value="Restriction endonuclease-like"/>
    <property type="match status" value="1"/>
</dbReference>
<comment type="similarity">
    <text evidence="1">Belongs to the UPF0102 family.</text>
</comment>
<gene>
    <name type="ordered locus">Cpar_0015</name>
</gene>